<gene>
    <name evidence="1" type="primary">miaA</name>
    <name type="ordered locus">BbuZS7_0851</name>
</gene>
<protein>
    <recommendedName>
        <fullName evidence="1">tRNA dimethylallyltransferase</fullName>
        <ecNumber evidence="1">2.5.1.75</ecNumber>
    </recommendedName>
    <alternativeName>
        <fullName evidence="1">Dimethylallyl diphosphate:tRNA dimethylallyltransferase</fullName>
        <shortName evidence="1">DMAPP:tRNA dimethylallyltransferase</shortName>
        <shortName evidence="1">DMATase</shortName>
    </alternativeName>
    <alternativeName>
        <fullName evidence="1">Isopentenyl-diphosphate:tRNA isopentenyltransferase</fullName>
        <shortName evidence="1">IPP transferase</shortName>
        <shortName evidence="1">IPPT</shortName>
        <shortName evidence="1">IPTase</shortName>
    </alternativeName>
</protein>
<sequence length="306" mass="35658">MKEDRVVFIFGPTAVGKSNILFHFPKNKAEIINVDSIQVYKEFNIASSKPSKNLMKHIKHHLVDFLDPEKDYTIGIFYEQALKIVKEIRQKKKIPIFVGGTAFYFKHLKDGFPSTPLVTSKIRIYVNNLLELKGKSYLLKELKNVDPIRFNMLNKNDIYRIKRSLEVYYQTGIPISQFQKKQNSEFKNIVIIGLKRSFEDLKTRISIRINEMLNSGLLSEIKGLFSKGYNENTPAFKGIGYNEFLLWKSRPCYGLNDIIGLINKNSFLYAKRQMTFFAKISDVLWLHPEDDLDNILNLIFKVDKEI</sequence>
<keyword id="KW-0067">ATP-binding</keyword>
<keyword id="KW-0460">Magnesium</keyword>
<keyword id="KW-0547">Nucleotide-binding</keyword>
<keyword id="KW-0808">Transferase</keyword>
<keyword id="KW-0819">tRNA processing</keyword>
<evidence type="ECO:0000255" key="1">
    <source>
        <dbReference type="HAMAP-Rule" id="MF_00185"/>
    </source>
</evidence>
<comment type="function">
    <text evidence="1">Catalyzes the transfer of a dimethylallyl group onto the adenine at position 37 in tRNAs that read codons beginning with uridine, leading to the formation of N6-(dimethylallyl)adenosine (i(6)A).</text>
</comment>
<comment type="catalytic activity">
    <reaction evidence="1">
        <text>adenosine(37) in tRNA + dimethylallyl diphosphate = N(6)-dimethylallyladenosine(37) in tRNA + diphosphate</text>
        <dbReference type="Rhea" id="RHEA:26482"/>
        <dbReference type="Rhea" id="RHEA-COMP:10162"/>
        <dbReference type="Rhea" id="RHEA-COMP:10375"/>
        <dbReference type="ChEBI" id="CHEBI:33019"/>
        <dbReference type="ChEBI" id="CHEBI:57623"/>
        <dbReference type="ChEBI" id="CHEBI:74411"/>
        <dbReference type="ChEBI" id="CHEBI:74415"/>
        <dbReference type="EC" id="2.5.1.75"/>
    </reaction>
</comment>
<comment type="cofactor">
    <cofactor evidence="1">
        <name>Mg(2+)</name>
        <dbReference type="ChEBI" id="CHEBI:18420"/>
    </cofactor>
</comment>
<comment type="subunit">
    <text evidence="1">Monomer.</text>
</comment>
<comment type="similarity">
    <text evidence="1">Belongs to the IPP transferase family.</text>
</comment>
<name>MIAA_BORBZ</name>
<organism>
    <name type="scientific">Borreliella burgdorferi (strain ZS7)</name>
    <name type="common">Borrelia burgdorferi</name>
    <dbReference type="NCBI Taxonomy" id="445985"/>
    <lineage>
        <taxon>Bacteria</taxon>
        <taxon>Pseudomonadati</taxon>
        <taxon>Spirochaetota</taxon>
        <taxon>Spirochaetia</taxon>
        <taxon>Spirochaetales</taxon>
        <taxon>Borreliaceae</taxon>
        <taxon>Borreliella</taxon>
    </lineage>
</organism>
<feature type="chain" id="PRO_1000118520" description="tRNA dimethylallyltransferase">
    <location>
        <begin position="1"/>
        <end position="306"/>
    </location>
</feature>
<feature type="region of interest" description="Interaction with substrate tRNA" evidence="1">
    <location>
        <begin position="35"/>
        <end position="38"/>
    </location>
</feature>
<feature type="binding site" evidence="1">
    <location>
        <begin position="11"/>
        <end position="18"/>
    </location>
    <ligand>
        <name>ATP</name>
        <dbReference type="ChEBI" id="CHEBI:30616"/>
    </ligand>
</feature>
<feature type="binding site" evidence="1">
    <location>
        <begin position="13"/>
        <end position="18"/>
    </location>
    <ligand>
        <name>substrate</name>
    </ligand>
</feature>
<feature type="site" description="Interaction with substrate tRNA" evidence="1">
    <location>
        <position position="101"/>
    </location>
</feature>
<feature type="site" description="Interaction with substrate tRNA" evidence="1">
    <location>
        <position position="123"/>
    </location>
</feature>
<accession>B7J0R6</accession>
<reference key="1">
    <citation type="journal article" date="2011" name="J. Bacteriol.">
        <title>Whole-genome sequences of thirteen isolates of Borrelia burgdorferi.</title>
        <authorList>
            <person name="Schutzer S.E."/>
            <person name="Fraser-Liggett C.M."/>
            <person name="Casjens S.R."/>
            <person name="Qiu W.G."/>
            <person name="Dunn J.J."/>
            <person name="Mongodin E.F."/>
            <person name="Luft B.J."/>
        </authorList>
    </citation>
    <scope>NUCLEOTIDE SEQUENCE [LARGE SCALE GENOMIC DNA]</scope>
    <source>
        <strain>ZS7</strain>
    </source>
</reference>
<proteinExistence type="inferred from homology"/>
<dbReference type="EC" id="2.5.1.75" evidence="1"/>
<dbReference type="EMBL" id="CP001205">
    <property type="protein sequence ID" value="ACK75052.1"/>
    <property type="molecule type" value="Genomic_DNA"/>
</dbReference>
<dbReference type="RefSeq" id="WP_002657257.1">
    <property type="nucleotide sequence ID" value="NC_011728.1"/>
</dbReference>
<dbReference type="SMR" id="B7J0R6"/>
<dbReference type="GeneID" id="56567399"/>
<dbReference type="KEGG" id="bbz:BbuZS7_0851"/>
<dbReference type="HOGENOM" id="CLU_032616_0_2_12"/>
<dbReference type="Proteomes" id="UP000006901">
    <property type="component" value="Chromosome"/>
</dbReference>
<dbReference type="GO" id="GO:0005524">
    <property type="term" value="F:ATP binding"/>
    <property type="evidence" value="ECO:0007669"/>
    <property type="project" value="UniProtKB-UniRule"/>
</dbReference>
<dbReference type="GO" id="GO:0052381">
    <property type="term" value="F:tRNA dimethylallyltransferase activity"/>
    <property type="evidence" value="ECO:0007669"/>
    <property type="project" value="UniProtKB-UniRule"/>
</dbReference>
<dbReference type="GO" id="GO:0006400">
    <property type="term" value="P:tRNA modification"/>
    <property type="evidence" value="ECO:0007669"/>
    <property type="project" value="TreeGrafter"/>
</dbReference>
<dbReference type="Gene3D" id="1.10.20.140">
    <property type="match status" value="1"/>
</dbReference>
<dbReference type="Gene3D" id="3.40.50.300">
    <property type="entry name" value="P-loop containing nucleotide triphosphate hydrolases"/>
    <property type="match status" value="1"/>
</dbReference>
<dbReference type="HAMAP" id="MF_00185">
    <property type="entry name" value="IPP_trans"/>
    <property type="match status" value="1"/>
</dbReference>
<dbReference type="InterPro" id="IPR039657">
    <property type="entry name" value="Dimethylallyltransferase"/>
</dbReference>
<dbReference type="InterPro" id="IPR018022">
    <property type="entry name" value="IPT"/>
</dbReference>
<dbReference type="InterPro" id="IPR027417">
    <property type="entry name" value="P-loop_NTPase"/>
</dbReference>
<dbReference type="NCBIfam" id="TIGR00174">
    <property type="entry name" value="miaA"/>
    <property type="match status" value="1"/>
</dbReference>
<dbReference type="PANTHER" id="PTHR11088">
    <property type="entry name" value="TRNA DIMETHYLALLYLTRANSFERASE"/>
    <property type="match status" value="1"/>
</dbReference>
<dbReference type="PANTHER" id="PTHR11088:SF60">
    <property type="entry name" value="TRNA DIMETHYLALLYLTRANSFERASE"/>
    <property type="match status" value="1"/>
</dbReference>
<dbReference type="Pfam" id="PF01715">
    <property type="entry name" value="IPPT"/>
    <property type="match status" value="1"/>
</dbReference>
<dbReference type="SUPFAM" id="SSF52540">
    <property type="entry name" value="P-loop containing nucleoside triphosphate hydrolases"/>
    <property type="match status" value="1"/>
</dbReference>